<evidence type="ECO:0000255" key="1">
    <source>
        <dbReference type="HAMAP-Rule" id="MF_01333"/>
    </source>
</evidence>
<evidence type="ECO:0000305" key="2"/>
<keyword id="KW-0687">Ribonucleoprotein</keyword>
<keyword id="KW-0689">Ribosomal protein</keyword>
<keyword id="KW-0694">RNA-binding</keyword>
<keyword id="KW-0699">rRNA-binding</keyword>
<keyword id="KW-0820">tRNA-binding</keyword>
<comment type="function">
    <text evidence="1">This is one of the proteins that bind and probably mediate the attachment of the 5S RNA into the large ribosomal subunit, where it forms part of the central protuberance. In the 70S ribosome it contacts protein S13 of the 30S subunit (bridge B1b), connecting the 2 subunits; this bridge is implicated in subunit movement. Contacts the P site tRNA; the 5S rRNA and some of its associated proteins might help stabilize positioning of ribosome-bound tRNAs.</text>
</comment>
<comment type="subunit">
    <text evidence="1">Part of the 50S ribosomal subunit; part of the 5S rRNA/L5/L18/L25 subcomplex. Contacts the 5S rRNA and the P site tRNA. Forms a bridge to the 30S subunit in the 70S ribosome.</text>
</comment>
<comment type="similarity">
    <text evidence="1">Belongs to the universal ribosomal protein uL5 family.</text>
</comment>
<name>RL5_THEM4</name>
<organism>
    <name type="scientific">Thermosipho melanesiensis (strain DSM 12029 / CIP 104789 / BI429)</name>
    <dbReference type="NCBI Taxonomy" id="391009"/>
    <lineage>
        <taxon>Bacteria</taxon>
        <taxon>Thermotogati</taxon>
        <taxon>Thermotogota</taxon>
        <taxon>Thermotogae</taxon>
        <taxon>Thermotogales</taxon>
        <taxon>Fervidobacteriaceae</taxon>
        <taxon>Thermosipho</taxon>
    </lineage>
</organism>
<reference key="1">
    <citation type="submission" date="2007-05" db="EMBL/GenBank/DDBJ databases">
        <title>Complete sequence of Thermosipho melanesiensis BI429.</title>
        <authorList>
            <consortium name="US DOE Joint Genome Institute"/>
            <person name="Copeland A."/>
            <person name="Lucas S."/>
            <person name="Lapidus A."/>
            <person name="Barry K."/>
            <person name="Glavina del Rio T."/>
            <person name="Dalin E."/>
            <person name="Tice H."/>
            <person name="Pitluck S."/>
            <person name="Chertkov O."/>
            <person name="Brettin T."/>
            <person name="Bruce D."/>
            <person name="Detter J.C."/>
            <person name="Han C."/>
            <person name="Schmutz J."/>
            <person name="Larimer F."/>
            <person name="Land M."/>
            <person name="Hauser L."/>
            <person name="Kyrpides N."/>
            <person name="Mikhailova N."/>
            <person name="Nelson K."/>
            <person name="Gogarten J.P."/>
            <person name="Noll K."/>
            <person name="Richardson P."/>
        </authorList>
    </citation>
    <scope>NUCLEOTIDE SEQUENCE [LARGE SCALE GENOMIC DNA]</scope>
    <source>
        <strain>DSM 12029 / CIP 104789 / BI429</strain>
    </source>
</reference>
<feature type="chain" id="PRO_1000067625" description="Large ribosomal subunit protein uL5">
    <location>
        <begin position="1"/>
        <end position="182"/>
    </location>
</feature>
<proteinExistence type="inferred from homology"/>
<dbReference type="EMBL" id="CP000716">
    <property type="protein sequence ID" value="ABR30826.1"/>
    <property type="molecule type" value="Genomic_DNA"/>
</dbReference>
<dbReference type="RefSeq" id="WP_012057187.1">
    <property type="nucleotide sequence ID" value="NC_009616.1"/>
</dbReference>
<dbReference type="SMR" id="A6LLM5"/>
<dbReference type="STRING" id="391009.Tmel_0965"/>
<dbReference type="KEGG" id="tme:Tmel_0965"/>
<dbReference type="eggNOG" id="COG0094">
    <property type="taxonomic scope" value="Bacteria"/>
</dbReference>
<dbReference type="HOGENOM" id="CLU_061015_2_1_0"/>
<dbReference type="OrthoDB" id="9806626at2"/>
<dbReference type="Proteomes" id="UP000001110">
    <property type="component" value="Chromosome"/>
</dbReference>
<dbReference type="GO" id="GO:1990904">
    <property type="term" value="C:ribonucleoprotein complex"/>
    <property type="evidence" value="ECO:0007669"/>
    <property type="project" value="UniProtKB-KW"/>
</dbReference>
<dbReference type="GO" id="GO:0005840">
    <property type="term" value="C:ribosome"/>
    <property type="evidence" value="ECO:0007669"/>
    <property type="project" value="UniProtKB-KW"/>
</dbReference>
<dbReference type="GO" id="GO:0019843">
    <property type="term" value="F:rRNA binding"/>
    <property type="evidence" value="ECO:0007669"/>
    <property type="project" value="UniProtKB-UniRule"/>
</dbReference>
<dbReference type="GO" id="GO:0003735">
    <property type="term" value="F:structural constituent of ribosome"/>
    <property type="evidence" value="ECO:0007669"/>
    <property type="project" value="InterPro"/>
</dbReference>
<dbReference type="GO" id="GO:0000049">
    <property type="term" value="F:tRNA binding"/>
    <property type="evidence" value="ECO:0007669"/>
    <property type="project" value="UniProtKB-UniRule"/>
</dbReference>
<dbReference type="GO" id="GO:0006412">
    <property type="term" value="P:translation"/>
    <property type="evidence" value="ECO:0007669"/>
    <property type="project" value="UniProtKB-UniRule"/>
</dbReference>
<dbReference type="FunFam" id="3.30.1440.10:FF:000001">
    <property type="entry name" value="50S ribosomal protein L5"/>
    <property type="match status" value="1"/>
</dbReference>
<dbReference type="Gene3D" id="3.30.1440.10">
    <property type="match status" value="1"/>
</dbReference>
<dbReference type="HAMAP" id="MF_01333_B">
    <property type="entry name" value="Ribosomal_uL5_B"/>
    <property type="match status" value="1"/>
</dbReference>
<dbReference type="InterPro" id="IPR002132">
    <property type="entry name" value="Ribosomal_uL5"/>
</dbReference>
<dbReference type="InterPro" id="IPR020930">
    <property type="entry name" value="Ribosomal_uL5_bac-type"/>
</dbReference>
<dbReference type="InterPro" id="IPR031309">
    <property type="entry name" value="Ribosomal_uL5_C"/>
</dbReference>
<dbReference type="InterPro" id="IPR020929">
    <property type="entry name" value="Ribosomal_uL5_CS"/>
</dbReference>
<dbReference type="InterPro" id="IPR022803">
    <property type="entry name" value="Ribosomal_uL5_dom_sf"/>
</dbReference>
<dbReference type="InterPro" id="IPR031310">
    <property type="entry name" value="Ribosomal_uL5_N"/>
</dbReference>
<dbReference type="NCBIfam" id="NF000585">
    <property type="entry name" value="PRK00010.1"/>
    <property type="match status" value="1"/>
</dbReference>
<dbReference type="PANTHER" id="PTHR11994">
    <property type="entry name" value="60S RIBOSOMAL PROTEIN L11-RELATED"/>
    <property type="match status" value="1"/>
</dbReference>
<dbReference type="Pfam" id="PF00281">
    <property type="entry name" value="Ribosomal_L5"/>
    <property type="match status" value="1"/>
</dbReference>
<dbReference type="Pfam" id="PF00673">
    <property type="entry name" value="Ribosomal_L5_C"/>
    <property type="match status" value="1"/>
</dbReference>
<dbReference type="PIRSF" id="PIRSF002161">
    <property type="entry name" value="Ribosomal_L5"/>
    <property type="match status" value="1"/>
</dbReference>
<dbReference type="SUPFAM" id="SSF55282">
    <property type="entry name" value="RL5-like"/>
    <property type="match status" value="1"/>
</dbReference>
<dbReference type="PROSITE" id="PS00358">
    <property type="entry name" value="RIBOSOMAL_L5"/>
    <property type="match status" value="1"/>
</dbReference>
<accession>A6LLM5</accession>
<protein>
    <recommendedName>
        <fullName evidence="1">Large ribosomal subunit protein uL5</fullName>
    </recommendedName>
    <alternativeName>
        <fullName evidence="2">50S ribosomal protein L5</fullName>
    </alternativeName>
</protein>
<gene>
    <name evidence="1" type="primary">rplE</name>
    <name type="ordered locus">Tmel_0965</name>
</gene>
<sequence length="182" mass="20969">MQYIPLKEKYEKEIRNAMMKEFGYKNIHQVPRLEKIVINMGIGEGSRNKDVIDIHAKELALIAGQKPVVTRAKKSISNFKIRKGMPIGLKVTLRGLRMYNFLYKLINLVLPKVRDFRGLNPNGFDGRGNYSFGLTEQLVFPEISPDQVRRVQGMDIVIVTTAKTDEEARKLLELFGFPFKRQ</sequence>